<name>DUT_MYCTO</name>
<evidence type="ECO:0000250" key="1"/>
<evidence type="ECO:0000305" key="2"/>
<proteinExistence type="inferred from homology"/>
<organism>
    <name type="scientific">Mycobacterium tuberculosis (strain CDC 1551 / Oshkosh)</name>
    <dbReference type="NCBI Taxonomy" id="83331"/>
    <lineage>
        <taxon>Bacteria</taxon>
        <taxon>Bacillati</taxon>
        <taxon>Actinomycetota</taxon>
        <taxon>Actinomycetes</taxon>
        <taxon>Mycobacteriales</taxon>
        <taxon>Mycobacteriaceae</taxon>
        <taxon>Mycobacterium</taxon>
        <taxon>Mycobacterium tuberculosis complex</taxon>
    </lineage>
</organism>
<keyword id="KW-0378">Hydrolase</keyword>
<keyword id="KW-0460">Magnesium</keyword>
<keyword id="KW-0479">Metal-binding</keyword>
<keyword id="KW-0546">Nucleotide metabolism</keyword>
<keyword id="KW-1185">Reference proteome</keyword>
<reference key="1">
    <citation type="journal article" date="2002" name="J. Bacteriol.">
        <title>Whole-genome comparison of Mycobacterium tuberculosis clinical and laboratory strains.</title>
        <authorList>
            <person name="Fleischmann R.D."/>
            <person name="Alland D."/>
            <person name="Eisen J.A."/>
            <person name="Carpenter L."/>
            <person name="White O."/>
            <person name="Peterson J.D."/>
            <person name="DeBoy R.T."/>
            <person name="Dodson R.J."/>
            <person name="Gwinn M.L."/>
            <person name="Haft D.H."/>
            <person name="Hickey E.K."/>
            <person name="Kolonay J.F."/>
            <person name="Nelson W.C."/>
            <person name="Umayam L.A."/>
            <person name="Ermolaeva M.D."/>
            <person name="Salzberg S.L."/>
            <person name="Delcher A."/>
            <person name="Utterback T.R."/>
            <person name="Weidman J.F."/>
            <person name="Khouri H.M."/>
            <person name="Gill J."/>
            <person name="Mikula A."/>
            <person name="Bishai W."/>
            <person name="Jacobs W.R. Jr."/>
            <person name="Venter J.C."/>
            <person name="Fraser C.M."/>
        </authorList>
    </citation>
    <scope>NUCLEOTIDE SEQUENCE [LARGE SCALE GENOMIC DNA]</scope>
    <source>
        <strain>CDC 1551 / Oshkosh</strain>
    </source>
</reference>
<feature type="chain" id="PRO_0000427076" description="Deoxyuridine 5'-triphosphate nucleotidohydrolase">
    <location>
        <begin position="1"/>
        <end position="154"/>
    </location>
</feature>
<feature type="binding site" evidence="1">
    <location>
        <begin position="64"/>
        <end position="66"/>
    </location>
    <ligand>
        <name>substrate</name>
    </ligand>
</feature>
<feature type="binding site" evidence="1">
    <location>
        <position position="77"/>
    </location>
    <ligand>
        <name>substrate</name>
    </ligand>
</feature>
<feature type="binding site" evidence="1">
    <location>
        <begin position="81"/>
        <end position="83"/>
    </location>
    <ligand>
        <name>substrate</name>
    </ligand>
</feature>
<feature type="binding site" evidence="1">
    <location>
        <position position="91"/>
    </location>
    <ligand>
        <name>substrate</name>
    </ligand>
</feature>
<comment type="function">
    <text evidence="1">This enzyme is involved in nucleotide metabolism: it produces dUMP, the immediate precursor of thymidine nucleotides and it decreases the intracellular concentration of dUTP so that uracil cannot be incorporated into DNA.</text>
</comment>
<comment type="catalytic activity">
    <reaction>
        <text>dUTP + H2O = dUMP + diphosphate + H(+)</text>
        <dbReference type="Rhea" id="RHEA:10248"/>
        <dbReference type="ChEBI" id="CHEBI:15377"/>
        <dbReference type="ChEBI" id="CHEBI:15378"/>
        <dbReference type="ChEBI" id="CHEBI:33019"/>
        <dbReference type="ChEBI" id="CHEBI:61555"/>
        <dbReference type="ChEBI" id="CHEBI:246422"/>
        <dbReference type="EC" id="3.6.1.23"/>
    </reaction>
</comment>
<comment type="cofactor">
    <cofactor evidence="1">
        <name>Mg(2+)</name>
        <dbReference type="ChEBI" id="CHEBI:18420"/>
    </cofactor>
</comment>
<comment type="pathway">
    <text>Pyrimidine metabolism; dUMP biosynthesis; dUMP from dCTP (dUTP route): step 2/2.</text>
</comment>
<comment type="subunit">
    <text evidence="1">Homotrimer.</text>
</comment>
<comment type="similarity">
    <text evidence="2">Belongs to the dUTPase family.</text>
</comment>
<gene>
    <name type="primary">dut</name>
    <name type="ordered locus">MT2771</name>
</gene>
<sequence>MSTTLAIVRLDPGLPLPSRAHDGDAGVDLYSAEDVELAPGRRALVRTGVAVAVPFGMVGLVHPRSGLATRVGLSIVNSPGTIDAGYRGEIKVALINLDPAAPIVVHRGDRIAQLLVQRVELVELVEVSSFDEAGLASTSRGDGGHGSSGGHASL</sequence>
<accession>P9WNS4</accession>
<accession>L0TAD4</accession>
<accession>O07199</accession>
<accession>P0A552</accession>
<dbReference type="EC" id="3.6.1.23"/>
<dbReference type="EMBL" id="AE000516">
    <property type="protein sequence ID" value="AAK47086.1"/>
    <property type="molecule type" value="Genomic_DNA"/>
</dbReference>
<dbReference type="PIR" id="D70530">
    <property type="entry name" value="D70530"/>
</dbReference>
<dbReference type="RefSeq" id="WP_003413930.1">
    <property type="nucleotide sequence ID" value="NZ_KK341227.1"/>
</dbReference>
<dbReference type="SMR" id="P9WNS4"/>
<dbReference type="GeneID" id="45426685"/>
<dbReference type="KEGG" id="mtc:MT2771"/>
<dbReference type="PATRIC" id="fig|83331.31.peg.2984"/>
<dbReference type="HOGENOM" id="CLU_068508_1_3_11"/>
<dbReference type="UniPathway" id="UPA00610">
    <property type="reaction ID" value="UER00666"/>
</dbReference>
<dbReference type="Proteomes" id="UP000001020">
    <property type="component" value="Chromosome"/>
</dbReference>
<dbReference type="GO" id="GO:0004170">
    <property type="term" value="F:dUTP diphosphatase activity"/>
    <property type="evidence" value="ECO:0007669"/>
    <property type="project" value="UniProtKB-UniRule"/>
</dbReference>
<dbReference type="GO" id="GO:0000287">
    <property type="term" value="F:magnesium ion binding"/>
    <property type="evidence" value="ECO:0007669"/>
    <property type="project" value="UniProtKB-UniRule"/>
</dbReference>
<dbReference type="GO" id="GO:0006226">
    <property type="term" value="P:dUMP biosynthetic process"/>
    <property type="evidence" value="ECO:0007669"/>
    <property type="project" value="UniProtKB-UniRule"/>
</dbReference>
<dbReference type="GO" id="GO:0046081">
    <property type="term" value="P:dUTP catabolic process"/>
    <property type="evidence" value="ECO:0007669"/>
    <property type="project" value="InterPro"/>
</dbReference>
<dbReference type="CDD" id="cd07557">
    <property type="entry name" value="trimeric_dUTPase"/>
    <property type="match status" value="1"/>
</dbReference>
<dbReference type="FunFam" id="2.70.40.10:FF:000008">
    <property type="entry name" value="Deoxyuridine 5'-triphosphate nucleotidohydrolase"/>
    <property type="match status" value="1"/>
</dbReference>
<dbReference type="Gene3D" id="2.70.40.10">
    <property type="match status" value="1"/>
</dbReference>
<dbReference type="HAMAP" id="MF_00116">
    <property type="entry name" value="dUTPase_bact"/>
    <property type="match status" value="1"/>
</dbReference>
<dbReference type="InterPro" id="IPR008181">
    <property type="entry name" value="dUTPase"/>
</dbReference>
<dbReference type="InterPro" id="IPR029054">
    <property type="entry name" value="dUTPase-like"/>
</dbReference>
<dbReference type="InterPro" id="IPR036157">
    <property type="entry name" value="dUTPase-like_sf"/>
</dbReference>
<dbReference type="InterPro" id="IPR033704">
    <property type="entry name" value="dUTPase_trimeric"/>
</dbReference>
<dbReference type="NCBIfam" id="TIGR00576">
    <property type="entry name" value="dut"/>
    <property type="match status" value="1"/>
</dbReference>
<dbReference type="NCBIfam" id="NF001862">
    <property type="entry name" value="PRK00601.1"/>
    <property type="match status" value="1"/>
</dbReference>
<dbReference type="PANTHER" id="PTHR11241">
    <property type="entry name" value="DEOXYURIDINE 5'-TRIPHOSPHATE NUCLEOTIDOHYDROLASE"/>
    <property type="match status" value="1"/>
</dbReference>
<dbReference type="PANTHER" id="PTHR11241:SF0">
    <property type="entry name" value="DEOXYURIDINE 5'-TRIPHOSPHATE NUCLEOTIDOHYDROLASE"/>
    <property type="match status" value="1"/>
</dbReference>
<dbReference type="Pfam" id="PF00692">
    <property type="entry name" value="dUTPase"/>
    <property type="match status" value="1"/>
</dbReference>
<dbReference type="SUPFAM" id="SSF51283">
    <property type="entry name" value="dUTPase-like"/>
    <property type="match status" value="1"/>
</dbReference>
<protein>
    <recommendedName>
        <fullName>Deoxyuridine 5'-triphosphate nucleotidohydrolase</fullName>
        <shortName>dUTPase</shortName>
        <ecNumber>3.6.1.23</ecNumber>
    </recommendedName>
    <alternativeName>
        <fullName>dUTP pyrophosphatase</fullName>
    </alternativeName>
</protein>